<keyword id="KW-0325">Glycoprotein</keyword>
<keyword id="KW-0333">Golgi apparatus</keyword>
<keyword id="KW-0472">Membrane</keyword>
<keyword id="KW-0653">Protein transport</keyword>
<keyword id="KW-0675">Receptor</keyword>
<keyword id="KW-1185">Reference proteome</keyword>
<keyword id="KW-0677">Repeat</keyword>
<keyword id="KW-0732">Signal</keyword>
<keyword id="KW-0812">Transmembrane</keyword>
<keyword id="KW-1133">Transmembrane helix</keyword>
<keyword id="KW-0813">Transport</keyword>
<organism>
    <name type="scientific">Arthroderma otae (strain ATCC MYA-4605 / CBS 113480)</name>
    <name type="common">Microsporum canis</name>
    <dbReference type="NCBI Taxonomy" id="554155"/>
    <lineage>
        <taxon>Eukaryota</taxon>
        <taxon>Fungi</taxon>
        <taxon>Dikarya</taxon>
        <taxon>Ascomycota</taxon>
        <taxon>Pezizomycotina</taxon>
        <taxon>Eurotiomycetes</taxon>
        <taxon>Eurotiomycetidae</taxon>
        <taxon>Onygenales</taxon>
        <taxon>Arthrodermataceae</taxon>
        <taxon>Microsporum</taxon>
    </lineage>
</organism>
<dbReference type="EMBL" id="DS995707">
    <property type="protein sequence ID" value="EEQ34720.1"/>
    <property type="status" value="ALT_SEQ"/>
    <property type="molecule type" value="Genomic_DNA"/>
</dbReference>
<dbReference type="RefSeq" id="XP_002843756.1">
    <property type="nucleotide sequence ID" value="XM_002843710.1"/>
</dbReference>
<dbReference type="SMR" id="C5FYX2"/>
<dbReference type="STRING" id="554155.C5FYX2"/>
<dbReference type="GlyCosmos" id="C5FYX2">
    <property type="glycosylation" value="3 sites, No reported glycans"/>
</dbReference>
<dbReference type="GeneID" id="9226444"/>
<dbReference type="eggNOG" id="KOG3511">
    <property type="taxonomic scope" value="Eukaryota"/>
</dbReference>
<dbReference type="HOGENOM" id="CLU_000700_0_0_1"/>
<dbReference type="OrthoDB" id="443634at2759"/>
<dbReference type="Proteomes" id="UP000002035">
    <property type="component" value="Unassembled WGS sequence"/>
</dbReference>
<dbReference type="GO" id="GO:0005829">
    <property type="term" value="C:cytosol"/>
    <property type="evidence" value="ECO:0007669"/>
    <property type="project" value="GOC"/>
</dbReference>
<dbReference type="GO" id="GO:0005794">
    <property type="term" value="C:Golgi apparatus"/>
    <property type="evidence" value="ECO:0007669"/>
    <property type="project" value="UniProtKB-SubCell"/>
</dbReference>
<dbReference type="GO" id="GO:0016020">
    <property type="term" value="C:membrane"/>
    <property type="evidence" value="ECO:0007669"/>
    <property type="project" value="UniProtKB-KW"/>
</dbReference>
<dbReference type="GO" id="GO:0006895">
    <property type="term" value="P:Golgi to endosome transport"/>
    <property type="evidence" value="ECO:0007669"/>
    <property type="project" value="TreeGrafter"/>
</dbReference>
<dbReference type="GO" id="GO:0006896">
    <property type="term" value="P:Golgi to vacuole transport"/>
    <property type="evidence" value="ECO:0007669"/>
    <property type="project" value="TreeGrafter"/>
</dbReference>
<dbReference type="GO" id="GO:0006623">
    <property type="term" value="P:protein targeting to vacuole"/>
    <property type="evidence" value="ECO:0007669"/>
    <property type="project" value="TreeGrafter"/>
</dbReference>
<dbReference type="CDD" id="cd15482">
    <property type="entry name" value="Sialidase_non-viral"/>
    <property type="match status" value="1"/>
</dbReference>
<dbReference type="FunFam" id="3.30.60.270:FF:000005">
    <property type="entry name" value="Sortilin"/>
    <property type="match status" value="2"/>
</dbReference>
<dbReference type="FunFam" id="2.10.70.80:FF:000001">
    <property type="entry name" value="Sortilin-related VPS10 domain-containing receptor 1"/>
    <property type="match status" value="1"/>
</dbReference>
<dbReference type="Gene3D" id="2.10.70.80">
    <property type="match status" value="2"/>
</dbReference>
<dbReference type="Gene3D" id="3.30.60.270">
    <property type="match status" value="2"/>
</dbReference>
<dbReference type="Gene3D" id="2.130.10.10">
    <property type="entry name" value="YVTN repeat-like/Quinoprotein amine dehydrogenase"/>
    <property type="match status" value="1"/>
</dbReference>
<dbReference type="InterPro" id="IPR031777">
    <property type="entry name" value="Sortilin_C"/>
</dbReference>
<dbReference type="InterPro" id="IPR031778">
    <property type="entry name" value="Sortilin_N"/>
</dbReference>
<dbReference type="InterPro" id="IPR006581">
    <property type="entry name" value="VPS10"/>
</dbReference>
<dbReference type="InterPro" id="IPR050310">
    <property type="entry name" value="VPS10-sortilin"/>
</dbReference>
<dbReference type="InterPro" id="IPR015943">
    <property type="entry name" value="WD40/YVTN_repeat-like_dom_sf"/>
</dbReference>
<dbReference type="PANTHER" id="PTHR12106">
    <property type="entry name" value="SORTILIN RELATED"/>
    <property type="match status" value="1"/>
</dbReference>
<dbReference type="PANTHER" id="PTHR12106:SF27">
    <property type="entry name" value="SORTILIN-RELATED RECEPTOR"/>
    <property type="match status" value="1"/>
</dbReference>
<dbReference type="Pfam" id="PF15902">
    <property type="entry name" value="Sortilin-Vps10"/>
    <property type="match status" value="2"/>
</dbReference>
<dbReference type="Pfam" id="PF15901">
    <property type="entry name" value="Sortilin_C"/>
    <property type="match status" value="2"/>
</dbReference>
<dbReference type="SMART" id="SM00602">
    <property type="entry name" value="VPS10"/>
    <property type="match status" value="2"/>
</dbReference>
<dbReference type="SUPFAM" id="SSF110296">
    <property type="entry name" value="Oligoxyloglucan reducing end-specific cellobiohydrolase"/>
    <property type="match status" value="2"/>
</dbReference>
<sequence length="1465" mass="164786">MIIRSILLAGSLLLASAIPGTLAKSDEPEIKVKELDKVPTSIYYFEDTDTIIFQKGLGEIYISTDAASSWEVMKDKTGLLWLNRHHTQSACIVGDKRKHWVTYDAAKTWREFEVPDKLILGERIQPFVFHGKDSNKAIINAEECLLTGCRRVTYYTVDGFKTIKKLLQDDSGCYWAVGHPNVGEGLDIRKKIDDRIFCILPGALPFNSSPRLVYSDKFFSDDMAIPVEINGRELRGINKFAFVKKFLVIATVSDGTSEAAIYVSRDAMHWDRAEFYGGPKVREGKFTFLESTNYSIQVNVASRRSKLPIGSLYTSDSTGTSFTMNVDSVNEDKDMYTDFEQVSGIQGIFLINRVDNAEEVKTGKASEKKIVSRISFDDGRTFKPLKYKDKEIHLHSITRPSNSGRTFSSPAPGLVMGVGNSGDRLKEYEHGNLYVSDDAGITWRKALDKAHKYEFGDQGSLLVAIFDEAGGDKIYTDEISYSLNHGKDWKKVKLPHTFLLLAEDKNKKFYVMSIDFSGLHERKCGKNDFERWAARLDEKGEPDCLMGHKQFYRRRKADADCFVKEKFKEPLPEIEPCKCTKEDFECAAGFKRNNDYDCEPDGKLKPSEGQCKKPDDKFMGPSGYRLIPGDDCIKKGGVDLEKEVERACKETSKGPISGKIAVEATPFETEGFQYRYLERSDTSSGDDETVIFKTDKGEIFVSKDHGKSWGRGKFKEPILEFMPHKYDKDVIYLLTGSKKAYWSIDRGHSFHAFEAKMPFTRTLGSLPLFFHPDRPDWLIWIGGEGCSGKKCNDVAYYSKNRGDEWELLLRGVNKCMFVGKEGELTNDDLIFCSQHEGEDPHKDMRLVSSDTMFSKKTSIHFDGKPIAGFTKMSEFIVVATKNGSELQSFTSVDGKTFAHAAFPPNFHVDFEHAYTVLDSSTHSVFLHVTEHAARGHEFGSILKSNSNGTSYVLSLNGANRNVKDYVDFEKIQVVEGVALGNVVFNTEEVKKKNEEKKFRSMITHNDASEWALLPPPKKDVDGHSFGCKVTDKGTNDCALHLHGYTERRDNRDSMSSGSAVGLIIGVGNVGSHLTARAESDTFMSRDAGITWHQIRKGRYQWEFGDQGSIIVIVAEGKPTKVLSYTLDEGETWTDFEFTDAEVTVEDISTVPSDTSKNFLLWTKKGSTTDLVVYNIDFSGLKERERQCVLKKDAPEADDYYLWSPKHPMQKDNCLFGHVSLYHRKKPDAKCYNGPRLDRLSSEKKNCECTRQDYECDYNYERQTDGSCALVKGLKPADPMQICKADPDAVEYFEPTGYRKLPVSTCEGGVQLDHIVARPCPNKKKEFEKKHPGISGLGLFLAIFFPLATAAAVGYWAFSKWDGKFGRIRLGESQPESIFSGDSPLIAIPVTIVAGTVAVITALPLLFSSLWRSVRGYTRLPGRWRQRPYASRGAFAARRGDYVGVVDDEDELLGAEEFEGDEEDEV</sequence>
<feature type="signal peptide" evidence="2">
    <location>
        <begin position="1"/>
        <end position="23"/>
    </location>
</feature>
<feature type="chain" id="PRO_0000407501" description="Vacuolar protein sorting/targeting protein 10">
    <location>
        <begin position="24"/>
        <end position="1465"/>
    </location>
</feature>
<feature type="topological domain" description="Lumenal" evidence="2">
    <location>
        <begin position="24"/>
        <end position="1336"/>
    </location>
</feature>
<feature type="transmembrane region" description="Helical" evidence="2">
    <location>
        <begin position="1337"/>
        <end position="1357"/>
    </location>
</feature>
<feature type="topological domain" description="Cytoplasmic" evidence="2">
    <location>
        <begin position="1358"/>
        <end position="1383"/>
    </location>
</feature>
<feature type="transmembrane region" description="Helical" evidence="2">
    <location>
        <begin position="1384"/>
        <end position="1404"/>
    </location>
</feature>
<feature type="topological domain" description="Lumenal" evidence="2">
    <location>
        <begin position="1405"/>
        <end position="1465"/>
    </location>
</feature>
<feature type="repeat" description="BNR 1">
    <location>
        <begin position="374"/>
        <end position="383"/>
    </location>
</feature>
<feature type="repeat" description="BNR 2">
    <location>
        <begin position="434"/>
        <end position="444"/>
    </location>
</feature>
<feature type="repeat" description="BNR 3">
    <location>
        <begin position="481"/>
        <end position="491"/>
    </location>
</feature>
<feature type="repeat" description="BNR 4">
    <location>
        <begin position="700"/>
        <end position="709"/>
    </location>
</feature>
<feature type="repeat" description="BNR 5">
    <location>
        <begin position="1082"/>
        <end position="1092"/>
    </location>
</feature>
<feature type="repeat" description="BNR 6">
    <location>
        <begin position="1124"/>
        <end position="1133"/>
    </location>
</feature>
<feature type="glycosylation site" description="N-linked (GlcNAc...) asparagine" evidence="2">
    <location>
        <position position="293"/>
    </location>
</feature>
<feature type="glycosylation site" description="N-linked (GlcNAc...) asparagine" evidence="2">
    <location>
        <position position="882"/>
    </location>
</feature>
<feature type="glycosylation site" description="N-linked (GlcNAc...) asparagine" evidence="2">
    <location>
        <position position="947"/>
    </location>
</feature>
<name>VPS10_ARTOC</name>
<protein>
    <recommendedName>
        <fullName>Vacuolar protein sorting/targeting protein 10</fullName>
    </recommendedName>
    <alternativeName>
        <fullName>Carboxypeptidase Y receptor</fullName>
        <shortName>CPY receptor</shortName>
    </alternativeName>
    <alternativeName>
        <fullName>Sortilin VPS10</fullName>
    </alternativeName>
    <alternativeName>
        <fullName>Vacuolar carboxypeptidase sorting receptor VPS10</fullName>
    </alternativeName>
</protein>
<comment type="function">
    <text evidence="1">Functions as a sorting receptor in the Golgi compartment required for the intracellular sorting and delivery of soluble vacuolar proteins, like carboxypeptidase Y (CPY) and proteinase A. Executes multiple rounds of sorting by cycling between the late Golgi and a prevacuolar endosome-like compartment (By similarity).</text>
</comment>
<comment type="subcellular location">
    <subcellularLocation>
        <location evidence="1">Golgi apparatus</location>
        <location evidence="1">trans-Golgi network membrane</location>
        <topology evidence="1">Multi-pass membrane protein</topology>
    </subcellularLocation>
    <subcellularLocation>
        <location evidence="1">Prevacuolar compartment membrane</location>
        <topology evidence="1">Multi-pass membrane protein</topology>
    </subcellularLocation>
    <text evidence="1">Cycles between the Golgi apparatus and the prevacuolar compartment.</text>
</comment>
<comment type="similarity">
    <text evidence="3">Belongs to the VPS10-related sortilin family.</text>
</comment>
<comment type="sequence caution" evidence="3">
    <conflict type="erroneous gene model prediction">
        <sequence resource="EMBL-CDS" id="EEQ34720"/>
    </conflict>
</comment>
<evidence type="ECO:0000250" key="1"/>
<evidence type="ECO:0000255" key="2"/>
<evidence type="ECO:0000305" key="3"/>
<gene>
    <name type="primary">VPS10</name>
    <name type="ORF">MCYG_07539</name>
</gene>
<proteinExistence type="inferred from homology"/>
<reference key="1">
    <citation type="journal article" date="2012" name="MBio">
        <title>Comparative genome analysis of Trichophyton rubrum and related dermatophytes reveals candidate genes involved in infection.</title>
        <authorList>
            <person name="Martinez D.A."/>
            <person name="Oliver B.G."/>
            <person name="Graeser Y."/>
            <person name="Goldberg J.M."/>
            <person name="Li W."/>
            <person name="Martinez-Rossi N.M."/>
            <person name="Monod M."/>
            <person name="Shelest E."/>
            <person name="Barton R.C."/>
            <person name="Birch E."/>
            <person name="Brakhage A.A."/>
            <person name="Chen Z."/>
            <person name="Gurr S.J."/>
            <person name="Heiman D."/>
            <person name="Heitman J."/>
            <person name="Kosti I."/>
            <person name="Rossi A."/>
            <person name="Saif S."/>
            <person name="Samalova M."/>
            <person name="Saunders C.W."/>
            <person name="Shea T."/>
            <person name="Summerbell R.C."/>
            <person name="Xu J."/>
            <person name="Young S."/>
            <person name="Zeng Q."/>
            <person name="Birren B.W."/>
            <person name="Cuomo C.A."/>
            <person name="White T.C."/>
        </authorList>
    </citation>
    <scope>NUCLEOTIDE SEQUENCE [LARGE SCALE GENOMIC DNA]</scope>
    <source>
        <strain>ATCC MYA-4605 / CBS 113480</strain>
    </source>
</reference>
<accession>C5FYX2</accession>